<accession>B7LC95</accession>
<name>DPS_ECO55</name>
<organism>
    <name type="scientific">Escherichia coli (strain 55989 / EAEC)</name>
    <dbReference type="NCBI Taxonomy" id="585055"/>
    <lineage>
        <taxon>Bacteria</taxon>
        <taxon>Pseudomonadati</taxon>
        <taxon>Pseudomonadota</taxon>
        <taxon>Gammaproteobacteria</taxon>
        <taxon>Enterobacterales</taxon>
        <taxon>Enterobacteriaceae</taxon>
        <taxon>Escherichia</taxon>
    </lineage>
</organism>
<gene>
    <name evidence="1" type="primary">dps</name>
    <name type="ordered locus">EC55989_0856</name>
</gene>
<proteinExistence type="inferred from homology"/>
<evidence type="ECO:0000255" key="1">
    <source>
        <dbReference type="HAMAP-Rule" id="MF_01441"/>
    </source>
</evidence>
<protein>
    <recommendedName>
        <fullName evidence="1">DNA protection during starvation protein</fullName>
        <ecNumber evidence="1">1.16.-.-</ecNumber>
    </recommendedName>
</protein>
<dbReference type="EC" id="1.16.-.-" evidence="1"/>
<dbReference type="EMBL" id="CU928145">
    <property type="protein sequence ID" value="CAU96722.1"/>
    <property type="molecule type" value="Genomic_DNA"/>
</dbReference>
<dbReference type="RefSeq" id="WP_000100800.1">
    <property type="nucleotide sequence ID" value="NZ_CP028304.1"/>
</dbReference>
<dbReference type="SMR" id="B7LC95"/>
<dbReference type="GeneID" id="93776616"/>
<dbReference type="KEGG" id="eck:EC55989_0856"/>
<dbReference type="HOGENOM" id="CLU_098183_1_2_6"/>
<dbReference type="Proteomes" id="UP000000746">
    <property type="component" value="Chromosome"/>
</dbReference>
<dbReference type="GO" id="GO:0005737">
    <property type="term" value="C:cytoplasm"/>
    <property type="evidence" value="ECO:0007669"/>
    <property type="project" value="UniProtKB-UniRule"/>
</dbReference>
<dbReference type="GO" id="GO:0009295">
    <property type="term" value="C:nucleoid"/>
    <property type="evidence" value="ECO:0007669"/>
    <property type="project" value="UniProtKB-SubCell"/>
</dbReference>
<dbReference type="GO" id="GO:0003677">
    <property type="term" value="F:DNA binding"/>
    <property type="evidence" value="ECO:0007669"/>
    <property type="project" value="UniProtKB-UniRule"/>
</dbReference>
<dbReference type="GO" id="GO:0008199">
    <property type="term" value="F:ferric iron binding"/>
    <property type="evidence" value="ECO:0007669"/>
    <property type="project" value="UniProtKB-UniRule"/>
</dbReference>
<dbReference type="GO" id="GO:0016722">
    <property type="term" value="F:oxidoreductase activity, acting on metal ions"/>
    <property type="evidence" value="ECO:0007669"/>
    <property type="project" value="InterPro"/>
</dbReference>
<dbReference type="GO" id="GO:0030261">
    <property type="term" value="P:chromosome condensation"/>
    <property type="evidence" value="ECO:0007669"/>
    <property type="project" value="UniProtKB-KW"/>
</dbReference>
<dbReference type="GO" id="GO:0006879">
    <property type="term" value="P:intracellular iron ion homeostasis"/>
    <property type="evidence" value="ECO:0007669"/>
    <property type="project" value="UniProtKB-KW"/>
</dbReference>
<dbReference type="CDD" id="cd01043">
    <property type="entry name" value="DPS"/>
    <property type="match status" value="1"/>
</dbReference>
<dbReference type="FunFam" id="1.20.1260.10:FF:000003">
    <property type="entry name" value="DNA protection during starvation protein"/>
    <property type="match status" value="1"/>
</dbReference>
<dbReference type="Gene3D" id="1.20.1260.10">
    <property type="match status" value="1"/>
</dbReference>
<dbReference type="HAMAP" id="MF_01441">
    <property type="entry name" value="Dps"/>
    <property type="match status" value="1"/>
</dbReference>
<dbReference type="InterPro" id="IPR002177">
    <property type="entry name" value="DPS_DNA-bd"/>
</dbReference>
<dbReference type="InterPro" id="IPR023188">
    <property type="entry name" value="DPS_DNA-bd_CS"/>
</dbReference>
<dbReference type="InterPro" id="IPR023067">
    <property type="entry name" value="Dps_gammaproteobac"/>
</dbReference>
<dbReference type="InterPro" id="IPR012347">
    <property type="entry name" value="Ferritin-like"/>
</dbReference>
<dbReference type="InterPro" id="IPR009078">
    <property type="entry name" value="Ferritin-like_SF"/>
</dbReference>
<dbReference type="InterPro" id="IPR008331">
    <property type="entry name" value="Ferritin_DPS_dom"/>
</dbReference>
<dbReference type="NCBIfam" id="NF006975">
    <property type="entry name" value="PRK09448.1"/>
    <property type="match status" value="1"/>
</dbReference>
<dbReference type="PANTHER" id="PTHR42932:SF3">
    <property type="entry name" value="DNA PROTECTION DURING STARVATION PROTEIN"/>
    <property type="match status" value="1"/>
</dbReference>
<dbReference type="PANTHER" id="PTHR42932">
    <property type="entry name" value="GENERAL STRESS PROTEIN 20U"/>
    <property type="match status" value="1"/>
</dbReference>
<dbReference type="Pfam" id="PF00210">
    <property type="entry name" value="Ferritin"/>
    <property type="match status" value="1"/>
</dbReference>
<dbReference type="PIRSF" id="PIRSF005900">
    <property type="entry name" value="Dps"/>
    <property type="match status" value="1"/>
</dbReference>
<dbReference type="PRINTS" id="PR01346">
    <property type="entry name" value="HELNAPAPROT"/>
</dbReference>
<dbReference type="SUPFAM" id="SSF47240">
    <property type="entry name" value="Ferritin-like"/>
    <property type="match status" value="1"/>
</dbReference>
<dbReference type="PROSITE" id="PS00818">
    <property type="entry name" value="DPS_1"/>
    <property type="match status" value="1"/>
</dbReference>
<dbReference type="PROSITE" id="PS00819">
    <property type="entry name" value="DPS_2"/>
    <property type="match status" value="1"/>
</dbReference>
<keyword id="KW-0963">Cytoplasm</keyword>
<keyword id="KW-0226">DNA condensation</keyword>
<keyword id="KW-0238">DNA-binding</keyword>
<keyword id="KW-0408">Iron</keyword>
<keyword id="KW-0409">Iron storage</keyword>
<keyword id="KW-0479">Metal-binding</keyword>
<keyword id="KW-0560">Oxidoreductase</keyword>
<keyword id="KW-1185">Reference proteome</keyword>
<feature type="chain" id="PRO_1000184932" description="DNA protection during starvation protein">
    <location>
        <begin position="1"/>
        <end position="167"/>
    </location>
</feature>
<feature type="binding site" evidence="1">
    <location>
        <position position="51"/>
    </location>
    <ligand>
        <name>Fe cation</name>
        <dbReference type="ChEBI" id="CHEBI:24875"/>
        <label>1</label>
        <note>ligand shared between two neighboring subunits</note>
    </ligand>
</feature>
<feature type="binding site" description="in other chain" evidence="1">
    <location>
        <position position="78"/>
    </location>
    <ligand>
        <name>Fe cation</name>
        <dbReference type="ChEBI" id="CHEBI:24875"/>
        <label>1</label>
        <note>ligand shared between two neighboring subunits</note>
    </ligand>
</feature>
<feature type="binding site" description="in other chain" evidence="1">
    <location>
        <position position="82"/>
    </location>
    <ligand>
        <name>Fe cation</name>
        <dbReference type="ChEBI" id="CHEBI:24875"/>
        <label>1</label>
        <note>ligand shared between two neighboring subunits</note>
    </ligand>
</feature>
<feature type="binding site" evidence="1">
    <location>
        <position position="82"/>
    </location>
    <ligand>
        <name>Fe cation</name>
        <dbReference type="ChEBI" id="CHEBI:24875"/>
        <label>2</label>
    </ligand>
</feature>
<reference key="1">
    <citation type="journal article" date="2009" name="PLoS Genet.">
        <title>Organised genome dynamics in the Escherichia coli species results in highly diverse adaptive paths.</title>
        <authorList>
            <person name="Touchon M."/>
            <person name="Hoede C."/>
            <person name="Tenaillon O."/>
            <person name="Barbe V."/>
            <person name="Baeriswyl S."/>
            <person name="Bidet P."/>
            <person name="Bingen E."/>
            <person name="Bonacorsi S."/>
            <person name="Bouchier C."/>
            <person name="Bouvet O."/>
            <person name="Calteau A."/>
            <person name="Chiapello H."/>
            <person name="Clermont O."/>
            <person name="Cruveiller S."/>
            <person name="Danchin A."/>
            <person name="Diard M."/>
            <person name="Dossat C."/>
            <person name="Karoui M.E."/>
            <person name="Frapy E."/>
            <person name="Garry L."/>
            <person name="Ghigo J.M."/>
            <person name="Gilles A.M."/>
            <person name="Johnson J."/>
            <person name="Le Bouguenec C."/>
            <person name="Lescat M."/>
            <person name="Mangenot S."/>
            <person name="Martinez-Jehanne V."/>
            <person name="Matic I."/>
            <person name="Nassif X."/>
            <person name="Oztas S."/>
            <person name="Petit M.A."/>
            <person name="Pichon C."/>
            <person name="Rouy Z."/>
            <person name="Ruf C.S."/>
            <person name="Schneider D."/>
            <person name="Tourret J."/>
            <person name="Vacherie B."/>
            <person name="Vallenet D."/>
            <person name="Medigue C."/>
            <person name="Rocha E.P.C."/>
            <person name="Denamur E."/>
        </authorList>
    </citation>
    <scope>NUCLEOTIDE SEQUENCE [LARGE SCALE GENOMIC DNA]</scope>
    <source>
        <strain>55989 / EAEC</strain>
    </source>
</reference>
<sequence>MSTAKLVKSKATNLLYTRNDVSDSEKKATVELLNRQVIQFIDLSLITKQAHWNMRGANFIAVHEMLDGFRTALIDHLDTMAERAVQLGGVALGTTQVINSKTPLKSYPLDIHNVQDHLKELADRYAIVANDVRKAIGEAKDDDTADILTAASRDLDKFLWFIESNIE</sequence>
<comment type="function">
    <text evidence="1">During stationary phase, binds the chromosome non-specifically, forming a highly ordered and stable dps-DNA co-crystal within which chromosomal DNA is condensed and protected from diverse damages. It protects DNA from oxidative damage by sequestering intracellular Fe(2+) ion and storing it in the form of Fe(3+) oxyhydroxide mineral, which can be released after reduction. One hydrogen peroxide oxidizes two Fe(2+) ions, which prevents hydroxyl radical production by the Fenton reaction. Dps also protects the cell from UV and gamma irradiation, iron and copper toxicity, thermal stress and acid and base shocks. Also shows a weak catalase activity.</text>
</comment>
<comment type="catalytic activity">
    <reaction evidence="1">
        <text>2 Fe(2+) + H2O2 + 2 H(+) = 2 Fe(3+) + 2 H2O</text>
        <dbReference type="Rhea" id="RHEA:48712"/>
        <dbReference type="ChEBI" id="CHEBI:15377"/>
        <dbReference type="ChEBI" id="CHEBI:15378"/>
        <dbReference type="ChEBI" id="CHEBI:16240"/>
        <dbReference type="ChEBI" id="CHEBI:29033"/>
        <dbReference type="ChEBI" id="CHEBI:29034"/>
    </reaction>
</comment>
<comment type="subunit">
    <text evidence="1">Homododecamer. The 12 subunits form a hollow sphere into which the mineral iron core of up to 500 Fe(3+) can be deposited.</text>
</comment>
<comment type="subcellular location">
    <subcellularLocation>
        <location evidence="1">Cytoplasm</location>
        <location evidence="1">Nucleoid</location>
    </subcellularLocation>
</comment>
<comment type="similarity">
    <text evidence="1">Belongs to the Dps family.</text>
</comment>